<keyword id="KW-0143">Chaperone</keyword>
<keyword id="KW-0963">Cytoplasm</keyword>
<keyword id="KW-0996">Nickel insertion</keyword>
<gene>
    <name evidence="1" type="primary">ureF</name>
    <name type="ordered locus">PSEEN2099</name>
</gene>
<accession>Q1IBN7</accession>
<dbReference type="EMBL" id="CT573326">
    <property type="protein sequence ID" value="CAK14928.1"/>
    <property type="molecule type" value="Genomic_DNA"/>
</dbReference>
<dbReference type="RefSeq" id="WP_011533331.1">
    <property type="nucleotide sequence ID" value="NC_008027.1"/>
</dbReference>
<dbReference type="SMR" id="Q1IBN7"/>
<dbReference type="STRING" id="384676.PSEEN2099"/>
<dbReference type="GeneID" id="32805307"/>
<dbReference type="KEGG" id="pen:PSEEN2099"/>
<dbReference type="eggNOG" id="COG0830">
    <property type="taxonomic scope" value="Bacteria"/>
</dbReference>
<dbReference type="HOGENOM" id="CLU_049215_2_1_6"/>
<dbReference type="OrthoDB" id="9798772at2"/>
<dbReference type="Proteomes" id="UP000000658">
    <property type="component" value="Chromosome"/>
</dbReference>
<dbReference type="GO" id="GO:0005737">
    <property type="term" value="C:cytoplasm"/>
    <property type="evidence" value="ECO:0007669"/>
    <property type="project" value="UniProtKB-SubCell"/>
</dbReference>
<dbReference type="GO" id="GO:0016151">
    <property type="term" value="F:nickel cation binding"/>
    <property type="evidence" value="ECO:0007669"/>
    <property type="project" value="UniProtKB-UniRule"/>
</dbReference>
<dbReference type="Gene3D" id="1.10.4190.10">
    <property type="entry name" value="Urease accessory protein UreF"/>
    <property type="match status" value="1"/>
</dbReference>
<dbReference type="HAMAP" id="MF_01385">
    <property type="entry name" value="UreF"/>
    <property type="match status" value="1"/>
</dbReference>
<dbReference type="InterPro" id="IPR002639">
    <property type="entry name" value="UreF"/>
</dbReference>
<dbReference type="InterPro" id="IPR038277">
    <property type="entry name" value="UreF_sf"/>
</dbReference>
<dbReference type="PANTHER" id="PTHR33620">
    <property type="entry name" value="UREASE ACCESSORY PROTEIN F"/>
    <property type="match status" value="1"/>
</dbReference>
<dbReference type="PANTHER" id="PTHR33620:SF1">
    <property type="entry name" value="UREASE ACCESSORY PROTEIN F"/>
    <property type="match status" value="1"/>
</dbReference>
<dbReference type="Pfam" id="PF01730">
    <property type="entry name" value="UreF"/>
    <property type="match status" value="1"/>
</dbReference>
<dbReference type="PIRSF" id="PIRSF009467">
    <property type="entry name" value="Ureas_acces_UreF"/>
    <property type="match status" value="1"/>
</dbReference>
<reference key="1">
    <citation type="journal article" date="2006" name="Nat. Biotechnol.">
        <title>Complete genome sequence of the entomopathogenic and metabolically versatile soil bacterium Pseudomonas entomophila.</title>
        <authorList>
            <person name="Vodovar N."/>
            <person name="Vallenet D."/>
            <person name="Cruveiller S."/>
            <person name="Rouy Z."/>
            <person name="Barbe V."/>
            <person name="Acosta C."/>
            <person name="Cattolico L."/>
            <person name="Jubin C."/>
            <person name="Lajus A."/>
            <person name="Segurens B."/>
            <person name="Vacherie B."/>
            <person name="Wincker P."/>
            <person name="Weissenbach J."/>
            <person name="Lemaitre B."/>
            <person name="Medigue C."/>
            <person name="Boccard F."/>
        </authorList>
    </citation>
    <scope>NUCLEOTIDE SEQUENCE [LARGE SCALE GENOMIC DNA]</scope>
    <source>
        <strain>L48</strain>
    </source>
</reference>
<protein>
    <recommendedName>
        <fullName evidence="1">Urease accessory protein UreF</fullName>
    </recommendedName>
</protein>
<proteinExistence type="inferred from homology"/>
<feature type="chain" id="PRO_0000344149" description="Urease accessory protein UreF">
    <location>
        <begin position="1"/>
        <end position="224"/>
    </location>
</feature>
<sequence length="224" mass="24760">MNTDLALLRLLQLASPGLPVGGFTYSQGLEWAVEAGWVRSVAGFAAWQREQLHDTLGYLDWPVLARLYRACQADDAEVFAYWSRFLLANRETSELRLEETQRGSALARLLDGWQLGQDPAWRNGLELSQLGGMAWLGAHWAIPLRDLALGHGFAWLEGAVMAGVKLVPFGQQAAQTLLRDLGEELPAVLDHALVLDDEQLGGGLPLLAIASSRHETQYTRLFRS</sequence>
<comment type="function">
    <text evidence="1">Required for maturation of urease via the functional incorporation of the urease nickel metallocenter.</text>
</comment>
<comment type="subunit">
    <text evidence="1">UreD, UreF and UreG form a complex that acts as a GTP-hydrolysis-dependent molecular chaperone, activating the urease apoprotein by helping to assemble the nickel containing metallocenter of UreC. The UreE protein probably delivers the nickel.</text>
</comment>
<comment type="subcellular location">
    <subcellularLocation>
        <location evidence="1">Cytoplasm</location>
    </subcellularLocation>
</comment>
<comment type="similarity">
    <text evidence="1">Belongs to the UreF family.</text>
</comment>
<organism>
    <name type="scientific">Pseudomonas entomophila (strain L48)</name>
    <dbReference type="NCBI Taxonomy" id="384676"/>
    <lineage>
        <taxon>Bacteria</taxon>
        <taxon>Pseudomonadati</taxon>
        <taxon>Pseudomonadota</taxon>
        <taxon>Gammaproteobacteria</taxon>
        <taxon>Pseudomonadales</taxon>
        <taxon>Pseudomonadaceae</taxon>
        <taxon>Pseudomonas</taxon>
    </lineage>
</organism>
<evidence type="ECO:0000255" key="1">
    <source>
        <dbReference type="HAMAP-Rule" id="MF_01385"/>
    </source>
</evidence>
<name>UREF_PSEE4</name>